<proteinExistence type="inferred from homology"/>
<evidence type="ECO:0000255" key="1">
    <source>
        <dbReference type="HAMAP-Rule" id="MF_00031"/>
    </source>
</evidence>
<accession>Q07H96</accession>
<organism>
    <name type="scientific">Rhodopseudomonas palustris (strain BisA53)</name>
    <dbReference type="NCBI Taxonomy" id="316055"/>
    <lineage>
        <taxon>Bacteria</taxon>
        <taxon>Pseudomonadati</taxon>
        <taxon>Pseudomonadota</taxon>
        <taxon>Alphaproteobacteria</taxon>
        <taxon>Hyphomicrobiales</taxon>
        <taxon>Nitrobacteraceae</taxon>
        <taxon>Rhodopseudomonas</taxon>
    </lineage>
</organism>
<comment type="function">
    <text evidence="1">The RuvA-RuvB-RuvC complex processes Holliday junction (HJ) DNA during genetic recombination and DNA repair, while the RuvA-RuvB complex plays an important role in the rescue of blocked DNA replication forks via replication fork reversal (RFR). RuvA specifically binds to HJ cruciform DNA, conferring on it an open structure. The RuvB hexamer acts as an ATP-dependent pump, pulling dsDNA into and through the RuvAB complex. HJ branch migration allows RuvC to scan DNA until it finds its consensus sequence, where it cleaves and resolves the cruciform DNA.</text>
</comment>
<comment type="subunit">
    <text evidence="1">Homotetramer. Forms an RuvA(8)-RuvB(12)-Holliday junction (HJ) complex. HJ DNA is sandwiched between 2 RuvA tetramers; dsDNA enters through RuvA and exits via RuvB. An RuvB hexamer assembles on each DNA strand where it exits the tetramer. Each RuvB hexamer is contacted by two RuvA subunits (via domain III) on 2 adjacent RuvB subunits; this complex drives branch migration. In the full resolvosome a probable DNA-RuvA(4)-RuvB(12)-RuvC(2) complex forms which resolves the HJ.</text>
</comment>
<comment type="subcellular location">
    <subcellularLocation>
        <location evidence="1">Cytoplasm</location>
    </subcellularLocation>
</comment>
<comment type="domain">
    <text evidence="1">Has three domains with a flexible linker between the domains II and III and assumes an 'L' shape. Domain III is highly mobile and contacts RuvB.</text>
</comment>
<comment type="similarity">
    <text evidence="1">Belongs to the RuvA family.</text>
</comment>
<name>RUVA_RHOP5</name>
<protein>
    <recommendedName>
        <fullName evidence="1">Holliday junction branch migration complex subunit RuvA</fullName>
    </recommendedName>
</protein>
<reference key="1">
    <citation type="submission" date="2006-09" db="EMBL/GenBank/DDBJ databases">
        <title>Complete sequence of Rhodopseudomonas palustris BisA53.</title>
        <authorList>
            <consortium name="US DOE Joint Genome Institute"/>
            <person name="Copeland A."/>
            <person name="Lucas S."/>
            <person name="Lapidus A."/>
            <person name="Barry K."/>
            <person name="Detter J.C."/>
            <person name="Glavina del Rio T."/>
            <person name="Hammon N."/>
            <person name="Israni S."/>
            <person name="Dalin E."/>
            <person name="Tice H."/>
            <person name="Pitluck S."/>
            <person name="Chain P."/>
            <person name="Malfatti S."/>
            <person name="Shin M."/>
            <person name="Vergez L."/>
            <person name="Schmutz J."/>
            <person name="Larimer F."/>
            <person name="Land M."/>
            <person name="Hauser L."/>
            <person name="Pelletier D.A."/>
            <person name="Kyrpides N."/>
            <person name="Kim E."/>
            <person name="Harwood C.S."/>
            <person name="Oda Y."/>
            <person name="Richardson P."/>
        </authorList>
    </citation>
    <scope>NUCLEOTIDE SEQUENCE [LARGE SCALE GENOMIC DNA]</scope>
    <source>
        <strain>BisA53</strain>
    </source>
</reference>
<dbReference type="EMBL" id="CP000463">
    <property type="protein sequence ID" value="ABJ08688.1"/>
    <property type="molecule type" value="Genomic_DNA"/>
</dbReference>
<dbReference type="SMR" id="Q07H96"/>
<dbReference type="STRING" id="316055.RPE_4769"/>
<dbReference type="KEGG" id="rpe:RPE_4769"/>
<dbReference type="eggNOG" id="COG0632">
    <property type="taxonomic scope" value="Bacteria"/>
</dbReference>
<dbReference type="HOGENOM" id="CLU_087936_3_0_5"/>
<dbReference type="OrthoDB" id="5293449at2"/>
<dbReference type="GO" id="GO:0005737">
    <property type="term" value="C:cytoplasm"/>
    <property type="evidence" value="ECO:0007669"/>
    <property type="project" value="UniProtKB-SubCell"/>
</dbReference>
<dbReference type="GO" id="GO:0009379">
    <property type="term" value="C:Holliday junction helicase complex"/>
    <property type="evidence" value="ECO:0007669"/>
    <property type="project" value="InterPro"/>
</dbReference>
<dbReference type="GO" id="GO:0048476">
    <property type="term" value="C:Holliday junction resolvase complex"/>
    <property type="evidence" value="ECO:0007669"/>
    <property type="project" value="UniProtKB-UniRule"/>
</dbReference>
<dbReference type="GO" id="GO:0005524">
    <property type="term" value="F:ATP binding"/>
    <property type="evidence" value="ECO:0007669"/>
    <property type="project" value="InterPro"/>
</dbReference>
<dbReference type="GO" id="GO:0000400">
    <property type="term" value="F:four-way junction DNA binding"/>
    <property type="evidence" value="ECO:0007669"/>
    <property type="project" value="UniProtKB-UniRule"/>
</dbReference>
<dbReference type="GO" id="GO:0009378">
    <property type="term" value="F:four-way junction helicase activity"/>
    <property type="evidence" value="ECO:0007669"/>
    <property type="project" value="InterPro"/>
</dbReference>
<dbReference type="GO" id="GO:0006310">
    <property type="term" value="P:DNA recombination"/>
    <property type="evidence" value="ECO:0007669"/>
    <property type="project" value="UniProtKB-UniRule"/>
</dbReference>
<dbReference type="GO" id="GO:0006281">
    <property type="term" value="P:DNA repair"/>
    <property type="evidence" value="ECO:0007669"/>
    <property type="project" value="UniProtKB-UniRule"/>
</dbReference>
<dbReference type="Gene3D" id="1.10.150.20">
    <property type="entry name" value="5' to 3' exonuclease, C-terminal subdomain"/>
    <property type="match status" value="1"/>
</dbReference>
<dbReference type="Gene3D" id="1.10.8.10">
    <property type="entry name" value="DNA helicase RuvA subunit, C-terminal domain"/>
    <property type="match status" value="1"/>
</dbReference>
<dbReference type="Gene3D" id="2.40.50.140">
    <property type="entry name" value="Nucleic acid-binding proteins"/>
    <property type="match status" value="1"/>
</dbReference>
<dbReference type="HAMAP" id="MF_00031">
    <property type="entry name" value="DNA_HJ_migration_RuvA"/>
    <property type="match status" value="1"/>
</dbReference>
<dbReference type="InterPro" id="IPR013849">
    <property type="entry name" value="DNA_helicase_Holl-junc_RuvA_I"/>
</dbReference>
<dbReference type="InterPro" id="IPR003583">
    <property type="entry name" value="Hlx-hairpin-Hlx_DNA-bd_motif"/>
</dbReference>
<dbReference type="InterPro" id="IPR012340">
    <property type="entry name" value="NA-bd_OB-fold"/>
</dbReference>
<dbReference type="InterPro" id="IPR000085">
    <property type="entry name" value="RuvA"/>
</dbReference>
<dbReference type="InterPro" id="IPR010994">
    <property type="entry name" value="RuvA_2-like"/>
</dbReference>
<dbReference type="InterPro" id="IPR011114">
    <property type="entry name" value="RuvA_C"/>
</dbReference>
<dbReference type="InterPro" id="IPR036267">
    <property type="entry name" value="RuvA_C_sf"/>
</dbReference>
<dbReference type="NCBIfam" id="TIGR00084">
    <property type="entry name" value="ruvA"/>
    <property type="match status" value="1"/>
</dbReference>
<dbReference type="Pfam" id="PF14520">
    <property type="entry name" value="HHH_5"/>
    <property type="match status" value="1"/>
</dbReference>
<dbReference type="Pfam" id="PF07499">
    <property type="entry name" value="RuvA_C"/>
    <property type="match status" value="1"/>
</dbReference>
<dbReference type="Pfam" id="PF01330">
    <property type="entry name" value="RuvA_N"/>
    <property type="match status" value="1"/>
</dbReference>
<dbReference type="SMART" id="SM00278">
    <property type="entry name" value="HhH1"/>
    <property type="match status" value="2"/>
</dbReference>
<dbReference type="SUPFAM" id="SSF46929">
    <property type="entry name" value="DNA helicase RuvA subunit, C-terminal domain"/>
    <property type="match status" value="1"/>
</dbReference>
<dbReference type="SUPFAM" id="SSF50249">
    <property type="entry name" value="Nucleic acid-binding proteins"/>
    <property type="match status" value="1"/>
</dbReference>
<dbReference type="SUPFAM" id="SSF47781">
    <property type="entry name" value="RuvA domain 2-like"/>
    <property type="match status" value="1"/>
</dbReference>
<keyword id="KW-0963">Cytoplasm</keyword>
<keyword id="KW-0227">DNA damage</keyword>
<keyword id="KW-0233">DNA recombination</keyword>
<keyword id="KW-0234">DNA repair</keyword>
<keyword id="KW-0238">DNA-binding</keyword>
<sequence>MIGKLKGLIDSYGEDYVILDVQGVGYQVHCASRTLQALPQAGEAAVLSIETYVREDQIKLFGFRSDLEREWFRLLQTVQGVGAKVALSVLSTLPPSDLADAIALRDKAAVARTPGVGPKVAERIVTELKDKAPGFASVDPAVAHLSGAIEERSAPRPVADAISALVNLGYGQPQAAAAIAAAARSAGDAAQTAQLIKLGLKELSK</sequence>
<feature type="chain" id="PRO_1000002528" description="Holliday junction branch migration complex subunit RuvA">
    <location>
        <begin position="1"/>
        <end position="205"/>
    </location>
</feature>
<feature type="region of interest" description="Domain I" evidence="1">
    <location>
        <begin position="1"/>
        <end position="64"/>
    </location>
</feature>
<feature type="region of interest" description="Domain II" evidence="1">
    <location>
        <begin position="65"/>
        <end position="143"/>
    </location>
</feature>
<feature type="region of interest" description="Flexible linker" evidence="1">
    <location>
        <begin position="144"/>
        <end position="153"/>
    </location>
</feature>
<feature type="region of interest" description="Domain III" evidence="1">
    <location>
        <begin position="153"/>
        <end position="205"/>
    </location>
</feature>
<gene>
    <name evidence="1" type="primary">ruvA</name>
    <name type="ordered locus">RPE_4769</name>
</gene>